<sequence length="589" mass="68625">MTISSAHPETEPKWWKEATIYQIYPASFKDSNNDGWGDMKGIASKLEYIKELGADAIWISPFYDSPQDDMGYDIANYEKVWPTYGTNEDCFALIEKTHKLGMKFITDLVINHCSSEHEWFKESRSSKTNPKRDWFFWRPPKGYDAEGKPIPPNNWRSYFGGSAWTFDEKTQEFYLRLFCSTQPDLNWENEDCRKAIYESAVGYWLDHGVDGFRIDVGSLYSKVAGLPDAPVIDENSKWQPSDPFTMNGPRIHEFHQEMNKFIRNRVKDGREIMTVGEMQHATDETKRLYTSASRHELSELFNFSHTDVGTSPKFRQNLIPYELKDWKVALAELFRYVNGTDCWSTIYLENHDQPRSITRFGDDSPKNRVISGKLLSVLLVSLSGTLYVYQGQELGEINFKNWPIEKYEDVEVRNNYDAIKEEHGENSKEMKRFLEAIALISRDHARTPMQWSREEPNAGFSGPNAKPWFYLNESFREGINAEDESKDPNSVLNFWKEALRFRKAHKDITVYGYDFEFIDLDNKKLFSFTKKYDNKTLFAALNFSSDSIDFTIPNNSSSFKLEFGNYPRSEVDASSRTLKPWEGRIYISE</sequence>
<organism>
    <name type="scientific">Saccharomyces cerevisiae (strain ATCC 204508 / S288c)</name>
    <name type="common">Baker's yeast</name>
    <dbReference type="NCBI Taxonomy" id="559292"/>
    <lineage>
        <taxon>Eukaryota</taxon>
        <taxon>Fungi</taxon>
        <taxon>Dikarya</taxon>
        <taxon>Ascomycota</taxon>
        <taxon>Saccharomycotina</taxon>
        <taxon>Saccharomycetes</taxon>
        <taxon>Saccharomycetales</taxon>
        <taxon>Saccharomycetaceae</taxon>
        <taxon>Saccharomyces</taxon>
    </lineage>
</organism>
<proteinExistence type="evidence at transcript level"/>
<protein>
    <recommendedName>
        <fullName>Oligo-1,6-glucosidase IMA2</fullName>
        <ecNumber>3.2.1.10</ecNumber>
    </recommendedName>
    <alternativeName>
        <fullName>Alpha-glucosidase</fullName>
    </alternativeName>
    <alternativeName>
        <fullName>Isomaltase 2</fullName>
    </alternativeName>
</protein>
<reference key="1">
    <citation type="journal article" date="1997" name="Nature">
        <title>The nucleotide sequence of Saccharomyces cerevisiae chromosome XV.</title>
        <authorList>
            <person name="Dujon B."/>
            <person name="Albermann K."/>
            <person name="Aldea M."/>
            <person name="Alexandraki D."/>
            <person name="Ansorge W."/>
            <person name="Arino J."/>
            <person name="Benes V."/>
            <person name="Bohn C."/>
            <person name="Bolotin-Fukuhara M."/>
            <person name="Bordonne R."/>
            <person name="Boyer J."/>
            <person name="Camasses A."/>
            <person name="Casamayor A."/>
            <person name="Casas C."/>
            <person name="Cheret G."/>
            <person name="Cziepluch C."/>
            <person name="Daignan-Fornier B."/>
            <person name="Dang V.-D."/>
            <person name="de Haan M."/>
            <person name="Delius H."/>
            <person name="Durand P."/>
            <person name="Fairhead C."/>
            <person name="Feldmann H."/>
            <person name="Gaillon L."/>
            <person name="Galisson F."/>
            <person name="Gamo F.-J."/>
            <person name="Gancedo C."/>
            <person name="Goffeau A."/>
            <person name="Goulding S.E."/>
            <person name="Grivell L.A."/>
            <person name="Habbig B."/>
            <person name="Hand N.J."/>
            <person name="Hani J."/>
            <person name="Hattenhorst U."/>
            <person name="Hebling U."/>
            <person name="Hernando Y."/>
            <person name="Herrero E."/>
            <person name="Heumann K."/>
            <person name="Hiesel R."/>
            <person name="Hilger F."/>
            <person name="Hofmann B."/>
            <person name="Hollenberg C.P."/>
            <person name="Hughes B."/>
            <person name="Jauniaux J.-C."/>
            <person name="Kalogeropoulos A."/>
            <person name="Katsoulou C."/>
            <person name="Kordes E."/>
            <person name="Lafuente M.J."/>
            <person name="Landt O."/>
            <person name="Louis E.J."/>
            <person name="Maarse A.C."/>
            <person name="Madania A."/>
            <person name="Mannhaupt G."/>
            <person name="Marck C."/>
            <person name="Martin R.P."/>
            <person name="Mewes H.-W."/>
            <person name="Michaux G."/>
            <person name="Paces V."/>
            <person name="Parle-McDermott A.G."/>
            <person name="Pearson B.M."/>
            <person name="Perrin A."/>
            <person name="Pettersson B."/>
            <person name="Poch O."/>
            <person name="Pohl T.M."/>
            <person name="Poirey R."/>
            <person name="Portetelle D."/>
            <person name="Pujol A."/>
            <person name="Purnelle B."/>
            <person name="Ramezani Rad M."/>
            <person name="Rechmann S."/>
            <person name="Schwager C."/>
            <person name="Schweizer M."/>
            <person name="Sor F."/>
            <person name="Sterky F."/>
            <person name="Tarassov I.A."/>
            <person name="Teodoru C."/>
            <person name="Tettelin H."/>
            <person name="Thierry A."/>
            <person name="Tobiasch E."/>
            <person name="Tzermia M."/>
            <person name="Uhlen M."/>
            <person name="Unseld M."/>
            <person name="Valens M."/>
            <person name="Vandenbol M."/>
            <person name="Vetter I."/>
            <person name="Vlcek C."/>
            <person name="Voet M."/>
            <person name="Volckaert G."/>
            <person name="Voss H."/>
            <person name="Wambutt R."/>
            <person name="Wedler H."/>
            <person name="Wiemann S."/>
            <person name="Winsor B."/>
            <person name="Wolfe K.H."/>
            <person name="Zollner A."/>
            <person name="Zumstein E."/>
            <person name="Kleine K."/>
        </authorList>
    </citation>
    <scope>NUCLEOTIDE SEQUENCE [LARGE SCALE GENOMIC DNA]</scope>
    <source>
        <strain>ATCC 204508 / S288c</strain>
    </source>
</reference>
<reference key="2">
    <citation type="journal article" date="2014" name="G3 (Bethesda)">
        <title>The reference genome sequence of Saccharomyces cerevisiae: Then and now.</title>
        <authorList>
            <person name="Engel S.R."/>
            <person name="Dietrich F.S."/>
            <person name="Fisk D.G."/>
            <person name="Binkley G."/>
            <person name="Balakrishnan R."/>
            <person name="Costanzo M.C."/>
            <person name="Dwight S.S."/>
            <person name="Hitz B.C."/>
            <person name="Karra K."/>
            <person name="Nash R.S."/>
            <person name="Weng S."/>
            <person name="Wong E.D."/>
            <person name="Lloyd P."/>
            <person name="Skrzypek M.S."/>
            <person name="Miyasato S.R."/>
            <person name="Simison M."/>
            <person name="Cherry J.M."/>
        </authorList>
    </citation>
    <scope>GENOME REANNOTATION</scope>
    <source>
        <strain>ATCC 204508 / S288c</strain>
    </source>
</reference>
<reference key="3">
    <citation type="journal article" date="2001" name="FEBS Lett.">
        <title>Global gene expression during short-term ethanol stress in Saccharomyces cerevisiae.</title>
        <authorList>
            <person name="Alexandre H."/>
            <person name="Ansanay-Galeote V."/>
            <person name="Dequin S."/>
            <person name="Blondin B."/>
        </authorList>
    </citation>
    <scope>INDUCTION</scope>
</reference>
<reference key="4">
    <citation type="journal article" date="2010" name="J. Biol. Chem.">
        <title>Characterization of a new multigene family encoding isomaltases in the yeast Saccharomyces cerevisiae, the IMA family.</title>
        <authorList>
            <person name="Teste M.A."/>
            <person name="Francois J.M."/>
            <person name="Parrou J.L."/>
        </authorList>
    </citation>
    <scope>FUNCTION</scope>
</reference>
<evidence type="ECO:0000250" key="1"/>
<evidence type="ECO:0000269" key="2">
    <source>
    </source>
</evidence>
<evidence type="ECO:0000269" key="3">
    <source>
    </source>
</evidence>
<evidence type="ECO:0000305" key="4"/>
<dbReference type="EC" id="3.2.1.10"/>
<dbReference type="EMBL" id="Z74899">
    <property type="protein sequence ID" value="CAA99179.1"/>
    <property type="molecule type" value="Genomic_DNA"/>
</dbReference>
<dbReference type="EMBL" id="BK006948">
    <property type="protein sequence ID" value="DAA10629.1"/>
    <property type="molecule type" value="Genomic_DNA"/>
</dbReference>
<dbReference type="PIR" id="S66856">
    <property type="entry name" value="S66856"/>
</dbReference>
<dbReference type="RefSeq" id="NP_014485.1">
    <property type="nucleotide sequence ID" value="NM_001183410.1"/>
</dbReference>
<dbReference type="SMR" id="Q08295"/>
<dbReference type="BioGRID" id="34261">
    <property type="interactions" value="54"/>
</dbReference>
<dbReference type="FunCoup" id="Q08295">
    <property type="interactions" value="1124"/>
</dbReference>
<dbReference type="IntAct" id="Q08295">
    <property type="interactions" value="1"/>
</dbReference>
<dbReference type="STRING" id="4932.YOL157C"/>
<dbReference type="CAZy" id="GH13">
    <property type="family name" value="Glycoside Hydrolase Family 13"/>
</dbReference>
<dbReference type="PaxDb" id="4932-YOL157C"/>
<dbReference type="PeptideAtlas" id="Q08295"/>
<dbReference type="EnsemblFungi" id="YOL157C_mRNA">
    <property type="protein sequence ID" value="YOL157C"/>
    <property type="gene ID" value="YOL157C"/>
</dbReference>
<dbReference type="GeneID" id="854008"/>
<dbReference type="KEGG" id="sce:YOL157C"/>
<dbReference type="AGR" id="SGD:S000005517"/>
<dbReference type="SGD" id="S000005517">
    <property type="gene designation" value="IMA2"/>
</dbReference>
<dbReference type="VEuPathDB" id="FungiDB:YOL157C"/>
<dbReference type="eggNOG" id="KOG0471">
    <property type="taxonomic scope" value="Eukaryota"/>
</dbReference>
<dbReference type="GeneTree" id="ENSGT00940000176291"/>
<dbReference type="HOGENOM" id="CLU_006462_1_1_1"/>
<dbReference type="InParanoid" id="Q08295"/>
<dbReference type="OMA" id="LEDKYIF"/>
<dbReference type="OrthoDB" id="1740265at2759"/>
<dbReference type="BioCyc" id="YEAST:G3O-33545-MONOMER"/>
<dbReference type="BRENDA" id="3.2.1.10">
    <property type="organism ID" value="984"/>
</dbReference>
<dbReference type="Reactome" id="R-SCE-352230">
    <property type="pathway name" value="Amino acid transport across the plasma membrane"/>
</dbReference>
<dbReference type="BioGRID-ORCS" id="854008">
    <property type="hits" value="0 hits in 10 CRISPR screens"/>
</dbReference>
<dbReference type="PRO" id="PR:Q08295"/>
<dbReference type="Proteomes" id="UP000002311">
    <property type="component" value="Chromosome XV"/>
</dbReference>
<dbReference type="RNAct" id="Q08295">
    <property type="molecule type" value="protein"/>
</dbReference>
<dbReference type="GO" id="GO:0004558">
    <property type="term" value="F:alpha-1,4-glucosidase activity"/>
    <property type="evidence" value="ECO:0000318"/>
    <property type="project" value="GO_Central"/>
</dbReference>
<dbReference type="GO" id="GO:0004556">
    <property type="term" value="F:alpha-amylase activity"/>
    <property type="evidence" value="ECO:0000318"/>
    <property type="project" value="GO_Central"/>
</dbReference>
<dbReference type="GO" id="GO:0033934">
    <property type="term" value="F:glucan 1,4-alpha-maltotriohydrolase activity"/>
    <property type="evidence" value="ECO:0000318"/>
    <property type="project" value="GO_Central"/>
</dbReference>
<dbReference type="GO" id="GO:0004574">
    <property type="term" value="F:oligo-1,6-glucosidase activity"/>
    <property type="evidence" value="ECO:0000314"/>
    <property type="project" value="SGD"/>
</dbReference>
<dbReference type="GO" id="GO:0004575">
    <property type="term" value="F:sucrose alpha-glucosidase activity"/>
    <property type="evidence" value="ECO:0000314"/>
    <property type="project" value="SGD"/>
</dbReference>
<dbReference type="GO" id="GO:0046352">
    <property type="term" value="P:disaccharide catabolic process"/>
    <property type="evidence" value="ECO:0000316"/>
    <property type="project" value="SGD"/>
</dbReference>
<dbReference type="GO" id="GO:0000025">
    <property type="term" value="P:maltose catabolic process"/>
    <property type="evidence" value="ECO:0000318"/>
    <property type="project" value="GO_Central"/>
</dbReference>
<dbReference type="GO" id="GO:0005987">
    <property type="term" value="P:sucrose catabolic process"/>
    <property type="evidence" value="ECO:0000318"/>
    <property type="project" value="GO_Central"/>
</dbReference>
<dbReference type="CDD" id="cd11333">
    <property type="entry name" value="AmyAc_SI_OligoGlu_DGase"/>
    <property type="match status" value="1"/>
</dbReference>
<dbReference type="FunFam" id="3.20.20.80:FF:000064">
    <property type="entry name" value="Oligo-1,6-glucosidase"/>
    <property type="match status" value="1"/>
</dbReference>
<dbReference type="FunFam" id="3.90.400.10:FF:000004">
    <property type="entry name" value="Oligo-1,6-glucosidase"/>
    <property type="match status" value="1"/>
</dbReference>
<dbReference type="FunFam" id="2.60.40.1180:FF:000027">
    <property type="entry name" value="Oligo-1,6-glucosidase IMA1"/>
    <property type="match status" value="1"/>
</dbReference>
<dbReference type="FunFam" id="3.20.20.80:FF:000087">
    <property type="entry name" value="Oligo-1,6-glucosidase IMA1"/>
    <property type="match status" value="1"/>
</dbReference>
<dbReference type="Gene3D" id="3.20.20.80">
    <property type="entry name" value="Glycosidases"/>
    <property type="match status" value="2"/>
</dbReference>
<dbReference type="Gene3D" id="2.60.40.1180">
    <property type="entry name" value="Golgi alpha-mannosidase II"/>
    <property type="match status" value="1"/>
</dbReference>
<dbReference type="Gene3D" id="3.90.400.10">
    <property type="entry name" value="Oligo-1,6-glucosidase, Domain 2"/>
    <property type="match status" value="1"/>
</dbReference>
<dbReference type="InterPro" id="IPR006047">
    <property type="entry name" value="Glyco_hydro_13_cat_dom"/>
</dbReference>
<dbReference type="InterPro" id="IPR013780">
    <property type="entry name" value="Glyco_hydro_b"/>
</dbReference>
<dbReference type="InterPro" id="IPR017853">
    <property type="entry name" value="Glycoside_hydrolase_SF"/>
</dbReference>
<dbReference type="InterPro" id="IPR045857">
    <property type="entry name" value="O16G_dom_2"/>
</dbReference>
<dbReference type="PANTHER" id="PTHR10357">
    <property type="entry name" value="ALPHA-AMYLASE FAMILY MEMBER"/>
    <property type="match status" value="1"/>
</dbReference>
<dbReference type="PANTHER" id="PTHR10357:SF179">
    <property type="entry name" value="NEUTRAL AND BASIC AMINO ACID TRANSPORT PROTEIN RBAT"/>
    <property type="match status" value="1"/>
</dbReference>
<dbReference type="Pfam" id="PF00128">
    <property type="entry name" value="Alpha-amylase"/>
    <property type="match status" value="1"/>
</dbReference>
<dbReference type="SMART" id="SM00642">
    <property type="entry name" value="Aamy"/>
    <property type="match status" value="1"/>
</dbReference>
<dbReference type="SUPFAM" id="SSF51445">
    <property type="entry name" value="(Trans)glycosidases"/>
    <property type="match status" value="1"/>
</dbReference>
<dbReference type="SUPFAM" id="SSF51011">
    <property type="entry name" value="Glycosyl hydrolase domain"/>
    <property type="match status" value="1"/>
</dbReference>
<gene>
    <name type="primary">IMA2</name>
    <name type="ordered locus">YOL157C</name>
</gene>
<comment type="function">
    <text evidence="3">Alpha-glucosidase with specificity for isomaltase, methyl-alpha-glucoside, and palatinose.</text>
</comment>
<comment type="catalytic activity">
    <reaction>
        <text>Hydrolysis of (1-&gt;6)-alpha-D-glucosidic linkages in some oligosaccharides produced from starch and glycogen by alpha-amylase, and in isomaltose.</text>
        <dbReference type="EC" id="3.2.1.10"/>
    </reaction>
</comment>
<comment type="induction">
    <text evidence="2">By ethanol.</text>
</comment>
<comment type="similarity">
    <text evidence="4">Belongs to the glycosyl hydrolase 13 family.</text>
</comment>
<name>IMA2_YEAST</name>
<accession>Q08295</accession>
<accession>D6W1R3</accession>
<keyword id="KW-0326">Glycosidase</keyword>
<keyword id="KW-0378">Hydrolase</keyword>
<keyword id="KW-0462">Maltose metabolism</keyword>
<keyword id="KW-1185">Reference proteome</keyword>
<feature type="chain" id="PRO_0000245259" description="Oligo-1,6-glucosidase IMA2">
    <location>
        <begin position="1"/>
        <end position="589"/>
    </location>
</feature>
<feature type="active site" description="Nucleophile" evidence="1">
    <location>
        <position position="215"/>
    </location>
</feature>
<feature type="active site" description="Proton donor" evidence="1">
    <location>
        <position position="277"/>
    </location>
</feature>
<feature type="site" description="Transition state stabilizer" evidence="1">
    <location>
        <position position="352"/>
    </location>
</feature>